<gene>
    <name evidence="1" type="primary">atpD</name>
    <name type="ordered locus">TK1604</name>
</gene>
<organism>
    <name type="scientific">Thermococcus kodakarensis (strain ATCC BAA-918 / JCM 12380 / KOD1)</name>
    <name type="common">Pyrococcus kodakaraensis (strain KOD1)</name>
    <dbReference type="NCBI Taxonomy" id="69014"/>
    <lineage>
        <taxon>Archaea</taxon>
        <taxon>Methanobacteriati</taxon>
        <taxon>Methanobacteriota</taxon>
        <taxon>Thermococci</taxon>
        <taxon>Thermococcales</taxon>
        <taxon>Thermococcaceae</taxon>
        <taxon>Thermococcus</taxon>
    </lineage>
</organism>
<name>AATD_THEKO</name>
<protein>
    <recommendedName>
        <fullName evidence="1">A-type ATP synthase subunit D</fullName>
    </recommendedName>
</protein>
<proteinExistence type="inferred from homology"/>
<dbReference type="EMBL" id="AP006878">
    <property type="protein sequence ID" value="BAD85793.1"/>
    <property type="molecule type" value="Genomic_DNA"/>
</dbReference>
<dbReference type="RefSeq" id="WP_011250555.1">
    <property type="nucleotide sequence ID" value="NC_006624.1"/>
</dbReference>
<dbReference type="SMR" id="Q5JIR1"/>
<dbReference type="FunCoup" id="Q5JIR1">
    <property type="interactions" value="106"/>
</dbReference>
<dbReference type="STRING" id="69014.TK1604"/>
<dbReference type="EnsemblBacteria" id="BAD85793">
    <property type="protein sequence ID" value="BAD85793"/>
    <property type="gene ID" value="TK1604"/>
</dbReference>
<dbReference type="GeneID" id="78448132"/>
<dbReference type="KEGG" id="tko:TK1604"/>
<dbReference type="PATRIC" id="fig|69014.16.peg.1563"/>
<dbReference type="eggNOG" id="arCOG04101">
    <property type="taxonomic scope" value="Archaea"/>
</dbReference>
<dbReference type="HOGENOM" id="CLU_069688_2_1_2"/>
<dbReference type="InParanoid" id="Q5JIR1"/>
<dbReference type="OrthoDB" id="117390at2157"/>
<dbReference type="PhylomeDB" id="Q5JIR1"/>
<dbReference type="Proteomes" id="UP000000536">
    <property type="component" value="Chromosome"/>
</dbReference>
<dbReference type="GO" id="GO:0005886">
    <property type="term" value="C:plasma membrane"/>
    <property type="evidence" value="ECO:0007669"/>
    <property type="project" value="UniProtKB-SubCell"/>
</dbReference>
<dbReference type="GO" id="GO:0033176">
    <property type="term" value="C:proton-transporting V-type ATPase complex"/>
    <property type="evidence" value="ECO:0000318"/>
    <property type="project" value="GO_Central"/>
</dbReference>
<dbReference type="GO" id="GO:0005524">
    <property type="term" value="F:ATP binding"/>
    <property type="evidence" value="ECO:0007669"/>
    <property type="project" value="UniProtKB-UniRule"/>
</dbReference>
<dbReference type="GO" id="GO:0046933">
    <property type="term" value="F:proton-transporting ATP synthase activity, rotational mechanism"/>
    <property type="evidence" value="ECO:0007669"/>
    <property type="project" value="UniProtKB-UniRule"/>
</dbReference>
<dbReference type="GO" id="GO:0046961">
    <property type="term" value="F:proton-transporting ATPase activity, rotational mechanism"/>
    <property type="evidence" value="ECO:0007669"/>
    <property type="project" value="InterPro"/>
</dbReference>
<dbReference type="GO" id="GO:0042777">
    <property type="term" value="P:proton motive force-driven plasma membrane ATP synthesis"/>
    <property type="evidence" value="ECO:0007669"/>
    <property type="project" value="UniProtKB-UniRule"/>
</dbReference>
<dbReference type="FunFam" id="1.10.287.3240:FF:000007">
    <property type="entry name" value="V-type ATP synthase subunit D"/>
    <property type="match status" value="1"/>
</dbReference>
<dbReference type="Gene3D" id="1.10.287.3240">
    <property type="match status" value="1"/>
</dbReference>
<dbReference type="HAMAP" id="MF_00271">
    <property type="entry name" value="ATP_synth_D_arch"/>
    <property type="match status" value="1"/>
</dbReference>
<dbReference type="InterPro" id="IPR002699">
    <property type="entry name" value="V_ATPase_D"/>
</dbReference>
<dbReference type="NCBIfam" id="NF001545">
    <property type="entry name" value="PRK00373.1-4"/>
    <property type="match status" value="1"/>
</dbReference>
<dbReference type="NCBIfam" id="TIGR00309">
    <property type="entry name" value="V_ATPase_subD"/>
    <property type="match status" value="1"/>
</dbReference>
<dbReference type="PANTHER" id="PTHR11671">
    <property type="entry name" value="V-TYPE ATP SYNTHASE SUBUNIT D"/>
    <property type="match status" value="1"/>
</dbReference>
<dbReference type="Pfam" id="PF01813">
    <property type="entry name" value="ATP-synt_D"/>
    <property type="match status" value="1"/>
</dbReference>
<sequence>MAELLNVKPTRMELLNLKRRITLAKKGHKLLKDKQDALVMEFFTIYDEALRLREELNEKMMEAFKALQRAEIDVGTLRMKEISLSVKPNREVEVKTRNVMGVPVPLIEAESFKRSAGERGYAFVSSSARVDLAAEKFEEVLDLAVRLAEVEETLKRLAKEIEVTKRRVNALEYIIIPRMEATVKFIKQRLDEMERENFFRLKRVKALIEARSGS</sequence>
<reference key="1">
    <citation type="journal article" date="2005" name="Genome Res.">
        <title>Complete genome sequence of the hyperthermophilic archaeon Thermococcus kodakaraensis KOD1 and comparison with Pyrococcus genomes.</title>
        <authorList>
            <person name="Fukui T."/>
            <person name="Atomi H."/>
            <person name="Kanai T."/>
            <person name="Matsumi R."/>
            <person name="Fujiwara S."/>
            <person name="Imanaka T."/>
        </authorList>
    </citation>
    <scope>NUCLEOTIDE SEQUENCE [LARGE SCALE GENOMIC DNA]</scope>
    <source>
        <strain>ATCC BAA-918 / JCM 12380 / KOD1</strain>
    </source>
</reference>
<feature type="chain" id="PRO_0000144257" description="A-type ATP synthase subunit D">
    <location>
        <begin position="1"/>
        <end position="214"/>
    </location>
</feature>
<evidence type="ECO:0000255" key="1">
    <source>
        <dbReference type="HAMAP-Rule" id="MF_00271"/>
    </source>
</evidence>
<accession>Q5JIR1</accession>
<keyword id="KW-0066">ATP synthesis</keyword>
<keyword id="KW-1003">Cell membrane</keyword>
<keyword id="KW-0375">Hydrogen ion transport</keyword>
<keyword id="KW-0406">Ion transport</keyword>
<keyword id="KW-0472">Membrane</keyword>
<keyword id="KW-1185">Reference proteome</keyword>
<keyword id="KW-0813">Transport</keyword>
<comment type="function">
    <text evidence="1">Component of the A-type ATP synthase that produces ATP from ADP in the presence of a proton gradient across the membrane.</text>
</comment>
<comment type="subunit">
    <text evidence="1">Has multiple subunits with at least A(3), B(3), C, D, E, F, H, I and proteolipid K(x).</text>
</comment>
<comment type="subcellular location">
    <subcellularLocation>
        <location evidence="1">Cell membrane</location>
        <topology evidence="1">Peripheral membrane protein</topology>
    </subcellularLocation>
</comment>
<comment type="similarity">
    <text evidence="1">Belongs to the V-ATPase D subunit family.</text>
</comment>